<sequence length="232" mass="26062">MGRELQKRKKRSSRAKVQTHTIKKKVLNPQGSGIVAKAWNKKETLSQNYSRFGLVAKLGTAAGGMAKKSAAANYAGITKDDPLAVKSADRGLFEVREVKVERDASGKIVKVLRSDNPLNDPLNEIESDSESEEPKPKNPTHDIEWHGISDDRQEMIAQSSRPEVVRMLEEEASRPVEKTVRYQSERELEWLQRLVAKHGDDVAAMVRDIKLNPMQQTKGDITKRLRKAGLLQ</sequence>
<keyword id="KW-0539">Nucleus</keyword>
<keyword id="KW-1185">Reference proteome</keyword>
<keyword id="KW-0687">Ribonucleoprotein</keyword>
<keyword id="KW-0690">Ribosome biogenesis</keyword>
<keyword id="KW-0698">rRNA processing</keyword>
<evidence type="ECO:0000250" key="1"/>
<evidence type="ECO:0000256" key="2">
    <source>
        <dbReference type="SAM" id="MobiDB-lite"/>
    </source>
</evidence>
<evidence type="ECO:0000305" key="3"/>
<reference key="1">
    <citation type="journal article" date="2003" name="Nucleic Acids Res.">
        <title>What's in the genome of a filamentous fungus? Analysis of the Neurospora genome sequence.</title>
        <authorList>
            <person name="Mannhaupt G."/>
            <person name="Montrone C."/>
            <person name="Haase D."/>
            <person name="Mewes H.-W."/>
            <person name="Aign V."/>
            <person name="Hoheisel J.D."/>
            <person name="Fartmann B."/>
            <person name="Nyakatura G."/>
            <person name="Kempken F."/>
            <person name="Maier J."/>
            <person name="Schulte U."/>
        </authorList>
    </citation>
    <scope>NUCLEOTIDE SEQUENCE [LARGE SCALE GENOMIC DNA]</scope>
    <source>
        <strain>ATCC 24698 / 74-OR23-1A / CBS 708.71 / DSM 1257 / FGSC 987</strain>
    </source>
</reference>
<reference key="2">
    <citation type="journal article" date="2003" name="Nature">
        <title>The genome sequence of the filamentous fungus Neurospora crassa.</title>
        <authorList>
            <person name="Galagan J.E."/>
            <person name="Calvo S.E."/>
            <person name="Borkovich K.A."/>
            <person name="Selker E.U."/>
            <person name="Read N.D."/>
            <person name="Jaffe D.B."/>
            <person name="FitzHugh W."/>
            <person name="Ma L.-J."/>
            <person name="Smirnov S."/>
            <person name="Purcell S."/>
            <person name="Rehman B."/>
            <person name="Elkins T."/>
            <person name="Engels R."/>
            <person name="Wang S."/>
            <person name="Nielsen C.B."/>
            <person name="Butler J."/>
            <person name="Endrizzi M."/>
            <person name="Qui D."/>
            <person name="Ianakiev P."/>
            <person name="Bell-Pedersen D."/>
            <person name="Nelson M.A."/>
            <person name="Werner-Washburne M."/>
            <person name="Selitrennikoff C.P."/>
            <person name="Kinsey J.A."/>
            <person name="Braun E.L."/>
            <person name="Zelter A."/>
            <person name="Schulte U."/>
            <person name="Kothe G.O."/>
            <person name="Jedd G."/>
            <person name="Mewes H.-W."/>
            <person name="Staben C."/>
            <person name="Marcotte E."/>
            <person name="Greenberg D."/>
            <person name="Roy A."/>
            <person name="Foley K."/>
            <person name="Naylor J."/>
            <person name="Stange-Thomann N."/>
            <person name="Barrett R."/>
            <person name="Gnerre S."/>
            <person name="Kamal M."/>
            <person name="Kamvysselis M."/>
            <person name="Mauceli E.W."/>
            <person name="Bielke C."/>
            <person name="Rudd S."/>
            <person name="Frishman D."/>
            <person name="Krystofova S."/>
            <person name="Rasmussen C."/>
            <person name="Metzenberg R.L."/>
            <person name="Perkins D.D."/>
            <person name="Kroken S."/>
            <person name="Cogoni C."/>
            <person name="Macino G."/>
            <person name="Catcheside D.E.A."/>
            <person name="Li W."/>
            <person name="Pratt R.J."/>
            <person name="Osmani S.A."/>
            <person name="DeSouza C.P.C."/>
            <person name="Glass N.L."/>
            <person name="Orbach M.J."/>
            <person name="Berglund J.A."/>
            <person name="Voelker R."/>
            <person name="Yarden O."/>
            <person name="Plamann M."/>
            <person name="Seiler S."/>
            <person name="Dunlap J.C."/>
            <person name="Radford A."/>
            <person name="Aramayo R."/>
            <person name="Natvig D.O."/>
            <person name="Alex L.A."/>
            <person name="Mannhaupt G."/>
            <person name="Ebbole D.J."/>
            <person name="Freitag M."/>
            <person name="Paulsen I."/>
            <person name="Sachs M.S."/>
            <person name="Lander E.S."/>
            <person name="Nusbaum C."/>
            <person name="Birren B.W."/>
        </authorList>
    </citation>
    <scope>NUCLEOTIDE SEQUENCE [LARGE SCALE GENOMIC DNA]</scope>
    <source>
        <strain>ATCC 24698 / 74-OR23-1A / CBS 708.71 / DSM 1257 / FGSC 987</strain>
    </source>
</reference>
<accession>Q7S0I1</accession>
<proteinExistence type="inferred from homology"/>
<feature type="chain" id="PRO_0000320381" description="Nucleolar protein 16">
    <location>
        <begin position="1"/>
        <end position="232"/>
    </location>
</feature>
<feature type="region of interest" description="Disordered" evidence="2">
    <location>
        <begin position="1"/>
        <end position="20"/>
    </location>
</feature>
<feature type="region of interest" description="Disordered" evidence="2">
    <location>
        <begin position="113"/>
        <end position="161"/>
    </location>
</feature>
<feature type="compositionally biased region" description="Basic residues" evidence="2">
    <location>
        <begin position="1"/>
        <end position="14"/>
    </location>
</feature>
<feature type="compositionally biased region" description="Basic and acidic residues" evidence="2">
    <location>
        <begin position="132"/>
        <end position="154"/>
    </location>
</feature>
<name>NOP16_NEUCR</name>
<dbReference type="EMBL" id="BX842620">
    <property type="protein sequence ID" value="CAE76182.1"/>
    <property type="molecule type" value="Genomic_DNA"/>
</dbReference>
<dbReference type="EMBL" id="CM002240">
    <property type="protein sequence ID" value="EAA28817.1"/>
    <property type="molecule type" value="Genomic_DNA"/>
</dbReference>
<dbReference type="RefSeq" id="XP_958053.1">
    <property type="nucleotide sequence ID" value="XM_952960.2"/>
</dbReference>
<dbReference type="SMR" id="Q7S0I1"/>
<dbReference type="FunCoup" id="Q7S0I1">
    <property type="interactions" value="243"/>
</dbReference>
<dbReference type="STRING" id="367110.Q7S0I1"/>
<dbReference type="PaxDb" id="5141-EFNCRP00000007583"/>
<dbReference type="EnsemblFungi" id="EAA28817">
    <property type="protein sequence ID" value="EAA28817"/>
    <property type="gene ID" value="NCU09528"/>
</dbReference>
<dbReference type="GeneID" id="3874200"/>
<dbReference type="KEGG" id="ncr:NCU09528"/>
<dbReference type="VEuPathDB" id="FungiDB:NCU09528"/>
<dbReference type="HOGENOM" id="CLU_078857_0_0_1"/>
<dbReference type="InParanoid" id="Q7S0I1"/>
<dbReference type="OMA" id="MQQTEAD"/>
<dbReference type="OrthoDB" id="285729at2759"/>
<dbReference type="Proteomes" id="UP000001805">
    <property type="component" value="Chromosome 2, Linkage Group V"/>
</dbReference>
<dbReference type="GO" id="GO:0005730">
    <property type="term" value="C:nucleolus"/>
    <property type="evidence" value="ECO:0000318"/>
    <property type="project" value="GO_Central"/>
</dbReference>
<dbReference type="GO" id="GO:0030687">
    <property type="term" value="C:preribosome, large subunit precursor"/>
    <property type="evidence" value="ECO:0007669"/>
    <property type="project" value="EnsemblFungi"/>
</dbReference>
<dbReference type="GO" id="GO:0042273">
    <property type="term" value="P:ribosomal large subunit biogenesis"/>
    <property type="evidence" value="ECO:0000318"/>
    <property type="project" value="GO_Central"/>
</dbReference>
<dbReference type="GO" id="GO:0006364">
    <property type="term" value="P:rRNA processing"/>
    <property type="evidence" value="ECO:0007669"/>
    <property type="project" value="UniProtKB-KW"/>
</dbReference>
<dbReference type="InterPro" id="IPR019002">
    <property type="entry name" value="Ribosome_biogenesis_Nop16"/>
</dbReference>
<dbReference type="PANTHER" id="PTHR13243">
    <property type="entry name" value="HSPC111 PROTEIN-RELATED"/>
    <property type="match status" value="1"/>
</dbReference>
<dbReference type="PANTHER" id="PTHR13243:SF1">
    <property type="entry name" value="NUCLEOLAR PROTEIN 16"/>
    <property type="match status" value="1"/>
</dbReference>
<dbReference type="Pfam" id="PF09420">
    <property type="entry name" value="Nop16"/>
    <property type="match status" value="1"/>
</dbReference>
<comment type="function">
    <text evidence="1">Involved in the biogenesis of the 60S ribosomal subunit.</text>
</comment>
<comment type="subunit">
    <text evidence="1">Component of the pre-66S ribosomal particle.</text>
</comment>
<comment type="subcellular location">
    <subcellularLocation>
        <location evidence="1">Nucleus</location>
        <location evidence="1">Nucleolus</location>
    </subcellularLocation>
</comment>
<comment type="similarity">
    <text evidence="3">Belongs to the NOP16 family.</text>
</comment>
<gene>
    <name type="primary">nop-16</name>
    <name type="ORF">B11E5.470</name>
    <name type="ORF">NCU09528</name>
</gene>
<protein>
    <recommendedName>
        <fullName>Nucleolar protein 16</fullName>
    </recommendedName>
</protein>
<organism>
    <name type="scientific">Neurospora crassa (strain ATCC 24698 / 74-OR23-1A / CBS 708.71 / DSM 1257 / FGSC 987)</name>
    <dbReference type="NCBI Taxonomy" id="367110"/>
    <lineage>
        <taxon>Eukaryota</taxon>
        <taxon>Fungi</taxon>
        <taxon>Dikarya</taxon>
        <taxon>Ascomycota</taxon>
        <taxon>Pezizomycotina</taxon>
        <taxon>Sordariomycetes</taxon>
        <taxon>Sordariomycetidae</taxon>
        <taxon>Sordariales</taxon>
        <taxon>Sordariaceae</taxon>
        <taxon>Neurospora</taxon>
    </lineage>
</organism>